<feature type="chain" id="PRO_0000198391" description="L-arabinose isomerase">
    <location>
        <begin position="1"/>
        <end position="474"/>
    </location>
</feature>
<feature type="binding site" evidence="1">
    <location>
        <position position="306"/>
    </location>
    <ligand>
        <name>Mn(2+)</name>
        <dbReference type="ChEBI" id="CHEBI:29035"/>
    </ligand>
</feature>
<feature type="binding site" evidence="1">
    <location>
        <position position="331"/>
    </location>
    <ligand>
        <name>Mn(2+)</name>
        <dbReference type="ChEBI" id="CHEBI:29035"/>
    </ligand>
</feature>
<feature type="binding site" evidence="1">
    <location>
        <position position="348"/>
    </location>
    <ligand>
        <name>Mn(2+)</name>
        <dbReference type="ChEBI" id="CHEBI:29035"/>
    </ligand>
</feature>
<feature type="binding site" evidence="1">
    <location>
        <position position="447"/>
    </location>
    <ligand>
        <name>Mn(2+)</name>
        <dbReference type="ChEBI" id="CHEBI:29035"/>
    </ligand>
</feature>
<dbReference type="EC" id="5.3.1.4" evidence="1"/>
<dbReference type="EMBL" id="BA000028">
    <property type="protein sequence ID" value="BAC14753.1"/>
    <property type="status" value="ALT_INIT"/>
    <property type="molecule type" value="Genomic_DNA"/>
</dbReference>
<dbReference type="RefSeq" id="WP_041544585.1">
    <property type="nucleotide sequence ID" value="NC_004193.1"/>
</dbReference>
<dbReference type="SMR" id="Q8EMP4"/>
<dbReference type="STRING" id="221109.gene:10735049"/>
<dbReference type="KEGG" id="oih:OB2797"/>
<dbReference type="eggNOG" id="COG2160">
    <property type="taxonomic scope" value="Bacteria"/>
</dbReference>
<dbReference type="HOGENOM" id="CLU_045663_0_0_9"/>
<dbReference type="OrthoDB" id="9765600at2"/>
<dbReference type="PhylomeDB" id="Q8EMP4"/>
<dbReference type="BRENDA" id="5.3.1.4">
    <property type="organism ID" value="4380"/>
</dbReference>
<dbReference type="UniPathway" id="UPA00145">
    <property type="reaction ID" value="UER00565"/>
</dbReference>
<dbReference type="Proteomes" id="UP000000822">
    <property type="component" value="Chromosome"/>
</dbReference>
<dbReference type="GO" id="GO:0005829">
    <property type="term" value="C:cytosol"/>
    <property type="evidence" value="ECO:0007669"/>
    <property type="project" value="TreeGrafter"/>
</dbReference>
<dbReference type="GO" id="GO:0008733">
    <property type="term" value="F:L-arabinose isomerase activity"/>
    <property type="evidence" value="ECO:0007669"/>
    <property type="project" value="UniProtKB-UniRule"/>
</dbReference>
<dbReference type="GO" id="GO:0030145">
    <property type="term" value="F:manganese ion binding"/>
    <property type="evidence" value="ECO:0007669"/>
    <property type="project" value="UniProtKB-UniRule"/>
</dbReference>
<dbReference type="GO" id="GO:0019569">
    <property type="term" value="P:L-arabinose catabolic process to xylulose 5-phosphate"/>
    <property type="evidence" value="ECO:0007669"/>
    <property type="project" value="UniProtKB-UniRule"/>
</dbReference>
<dbReference type="Gene3D" id="3.40.50.10940">
    <property type="match status" value="1"/>
</dbReference>
<dbReference type="HAMAP" id="MF_00519">
    <property type="entry name" value="Arabinose_Isome"/>
    <property type="match status" value="1"/>
</dbReference>
<dbReference type="InterPro" id="IPR024664">
    <property type="entry name" value="Ara_Isoase_C"/>
</dbReference>
<dbReference type="InterPro" id="IPR055390">
    <property type="entry name" value="AraA_central"/>
</dbReference>
<dbReference type="InterPro" id="IPR055389">
    <property type="entry name" value="AraA_N"/>
</dbReference>
<dbReference type="InterPro" id="IPR038583">
    <property type="entry name" value="AraA_N_sf"/>
</dbReference>
<dbReference type="InterPro" id="IPR004216">
    <property type="entry name" value="Fuc/Ara_isomerase_C"/>
</dbReference>
<dbReference type="InterPro" id="IPR009015">
    <property type="entry name" value="Fucose_isomerase_N/cen_sf"/>
</dbReference>
<dbReference type="InterPro" id="IPR003762">
    <property type="entry name" value="Lara_isomerase"/>
</dbReference>
<dbReference type="NCBIfam" id="NF002795">
    <property type="entry name" value="PRK02929.1"/>
    <property type="match status" value="1"/>
</dbReference>
<dbReference type="PANTHER" id="PTHR38464">
    <property type="entry name" value="L-ARABINOSE ISOMERASE"/>
    <property type="match status" value="1"/>
</dbReference>
<dbReference type="PANTHER" id="PTHR38464:SF1">
    <property type="entry name" value="L-ARABINOSE ISOMERASE"/>
    <property type="match status" value="1"/>
</dbReference>
<dbReference type="Pfam" id="PF24856">
    <property type="entry name" value="AraA_central"/>
    <property type="match status" value="1"/>
</dbReference>
<dbReference type="Pfam" id="PF02610">
    <property type="entry name" value="AraA_N"/>
    <property type="match status" value="1"/>
</dbReference>
<dbReference type="Pfam" id="PF11762">
    <property type="entry name" value="Arabinose_Iso_C"/>
    <property type="match status" value="1"/>
</dbReference>
<dbReference type="PIRSF" id="PIRSF001478">
    <property type="entry name" value="L-ara_isomerase"/>
    <property type="match status" value="1"/>
</dbReference>
<dbReference type="SUPFAM" id="SSF50443">
    <property type="entry name" value="FucI/AraA C-terminal domain-like"/>
    <property type="match status" value="1"/>
</dbReference>
<dbReference type="SUPFAM" id="SSF53743">
    <property type="entry name" value="FucI/AraA N-terminal and middle domains"/>
    <property type="match status" value="1"/>
</dbReference>
<reference key="1">
    <citation type="journal article" date="2002" name="Nucleic Acids Res.">
        <title>Genome sequence of Oceanobacillus iheyensis isolated from the Iheya Ridge and its unexpected adaptive capabilities to extreme environments.</title>
        <authorList>
            <person name="Takami H."/>
            <person name="Takaki Y."/>
            <person name="Uchiyama I."/>
        </authorList>
    </citation>
    <scope>NUCLEOTIDE SEQUENCE [LARGE SCALE GENOMIC DNA]</scope>
    <source>
        <strain>DSM 14371 / CIP 107618 / JCM 11309 / KCTC 3954 / HTE831</strain>
    </source>
</reference>
<accession>Q8EMP4</accession>
<comment type="function">
    <text evidence="1">Catalyzes the conversion of L-arabinose to L-ribulose.</text>
</comment>
<comment type="catalytic activity">
    <reaction evidence="1">
        <text>beta-L-arabinopyranose = L-ribulose</text>
        <dbReference type="Rhea" id="RHEA:14821"/>
        <dbReference type="ChEBI" id="CHEBI:16880"/>
        <dbReference type="ChEBI" id="CHEBI:40886"/>
        <dbReference type="EC" id="5.3.1.4"/>
    </reaction>
</comment>
<comment type="cofactor">
    <cofactor evidence="1">
        <name>Mn(2+)</name>
        <dbReference type="ChEBI" id="CHEBI:29035"/>
    </cofactor>
    <text evidence="1">Binds 1 Mn(2+) ion per subunit.</text>
</comment>
<comment type="pathway">
    <text evidence="1">Carbohydrate degradation; L-arabinose degradation via L-ribulose; D-xylulose 5-phosphate from L-arabinose (bacterial route): step 1/3.</text>
</comment>
<comment type="similarity">
    <text evidence="1">Belongs to the arabinose isomerase family.</text>
</comment>
<comment type="sequence caution" evidence="2">
    <conflict type="erroneous initiation">
        <sequence resource="EMBL-CDS" id="BAC14753"/>
    </conflict>
</comment>
<organism>
    <name type="scientific">Oceanobacillus iheyensis (strain DSM 14371 / CIP 107618 / JCM 11309 / KCTC 3954 / HTE831)</name>
    <dbReference type="NCBI Taxonomy" id="221109"/>
    <lineage>
        <taxon>Bacteria</taxon>
        <taxon>Bacillati</taxon>
        <taxon>Bacillota</taxon>
        <taxon>Bacilli</taxon>
        <taxon>Bacillales</taxon>
        <taxon>Bacillaceae</taxon>
        <taxon>Oceanobacillus</taxon>
    </lineage>
</organism>
<name>ARAA_OCEIH</name>
<proteinExistence type="inferred from homology"/>
<protein>
    <recommendedName>
        <fullName evidence="1">L-arabinose isomerase</fullName>
        <ecNumber evidence="1">5.3.1.4</ecNumber>
    </recommendedName>
</protein>
<keyword id="KW-0054">Arabinose catabolism</keyword>
<keyword id="KW-0119">Carbohydrate metabolism</keyword>
<keyword id="KW-0413">Isomerase</keyword>
<keyword id="KW-0464">Manganese</keyword>
<keyword id="KW-0479">Metal-binding</keyword>
<keyword id="KW-1185">Reference proteome</keyword>
<gene>
    <name evidence="1" type="primary">araA</name>
    <name type="ordered locus">OB2797</name>
</gene>
<sequence length="474" mass="53283">MLTLKEKEFWFVVGSQQLYGEEALQEVKAQAQTVTDALNESGALPYPIVLKDLAINADQITNVMKEVNYRDEVAGVITWMHTFSPAKMWIRGTKLLQKPLLHLATQFNESIPWDTIDMDFMNLNQSAHGDREYGFINARLNKQNKVVVGYWGKSEVQRQIAEWMDVAAAYNESFNVKVARFGDNMRNVAVTDGDKIEAQIQFGWTVDYFAIGDLVQYVNAVKEEEIDVLFAEYKDSYDFDYGDYSKDDWEASVRVQASYEIAIKRFLDDGGYNAFTSNFEDLYGMKQLPGLAVQRLMGQGYGFAGEGDWKTAALDRLLKVMSHNQSTGFMEDYTYELAEGKEAILQSHMLEVDPTLASTKPKITVFPLGIGDREDPARLVFDGKAGDGVVVSMADFGTHFKLLINEVNAFEPTTPAPNLPVARVLWEVKPNFQDGVKAWIENGGGHHTVVSLNLTTDQVVSYAKLVGLDYIVIK</sequence>
<evidence type="ECO:0000255" key="1">
    <source>
        <dbReference type="HAMAP-Rule" id="MF_00519"/>
    </source>
</evidence>
<evidence type="ECO:0000305" key="2"/>